<comment type="function">
    <text evidence="1 5 6 7 8">Calcium-dependent mitochondrial carrier protein that catalyzes the import of ATP co-transported with metal divalent cations across the mitochondrial inner membrane in exchange for phosphate (Pi) (PubMed:22062157, PubMed:26140942, PubMed:26444389, PubMed:28695448). Can transport phosphate, AMP, ADP, ATP, adenosine 5'-phosphosulfate, sulfate and thiosulfate, and, to a lesser extent, other nucleotides (PubMed:26140942, PubMed:26444389). Binds calcium ions Ca(2+) (PubMed:22062157). Also mediates calcium uptake (By similarity).</text>
</comment>
<comment type="activity regulation">
    <text evidence="6 7 8">Counter-exchange transport activity is saturable and inhibited by pyridoxal-5'-phosphate, EDTA and EGTA (PubMed:26140942). Activated by calcium Ca(2+) and manganese Mn(2+) ions, and slightly by iron Fe(2+) and zinc Zn(2+) ions (PubMed:26140942, PubMed:28695448). Repressed by copper ions Cu(2+) and slightly by magnesium Mg(2+) ions (PubMed:28695448). Magnesium Mg(2+) ions promotes slightly ATP uptake, ATP-Mg(2+) being exchanged with ATP(4-) (PubMed:26444389).</text>
</comment>
<comment type="biophysicochemical properties">
    <kinetics>
        <KM evidence="6">0.6 mM for Pi</KM>
        <KM evidence="6">0.25 mM for AMP</KM>
        <KM evidence="6">0.17 mM for ADP</KM>
        <KM evidence="6">0.14 mM for ATP</KM>
        <KM evidence="7">72 uM for ADP (in the absence of calcium ions Ca(2+) but in the presence of ATP)</KM>
        <KM evidence="7">113 uM for ATP (in the absence of calcium ions Ca(2+) but in the presence of Pi)</KM>
        <KM evidence="7">140 uM for ADP (in the presence of calcium ions Ca(2+) and ATP)</KM>
        <KM evidence="7">58 uM for ATP (in the presence of calcium ions Ca(2+) and Pi)</KM>
        <Vmax evidence="6">330.0 umol/min/g enzyme with Pi as substrate</Vmax>
        <Vmax evidence="6">300.0 umol/min/g enzyme with AMP as substrate</Vmax>
        <Vmax evidence="6">410.0 umol/min/g enzyme with ADP as substrate</Vmax>
        <Vmax evidence="6">330.0 umol/min/g enzyme with ATP as substrate</Vmax>
        <Vmax evidence="7">770.0 nmol/h/mg enzyme with ADP as substrate (in the absence of calcium ions Ca(2+) but in the presence of ATP)</Vmax>
        <Vmax evidence="7">282.0 nmol/h/mg enzyme with ATP as substrate (in the absence of calcium ions Ca(2+) but in the presence of Pi)</Vmax>
        <Vmax evidence="7">1025.0 nmol/h/mg enzyme with ADP as substrate (in the presence of calcium ions Ca(2+) and ATP)</Vmax>
        <Vmax evidence="7">646.0 nmol/h/mg enzyme with ATP as substrate (in the presence of calcium ions Ca(2+) and Pi)</Vmax>
    </kinetics>
</comment>
<comment type="subcellular location">
    <subcellularLocation>
        <location evidence="5">Mitochondrion inner membrane</location>
        <topology evidence="2">Multi-pass membrane protein</topology>
    </subcellularLocation>
</comment>
<comment type="tissue specificity">
    <text evidence="6">Expressed in flowers, leaves, stems, roots and seedlings, mostly in seedlings.</text>
</comment>
<comment type="developmental stage">
    <text evidence="6">Slightly expressed in seedling leaves.</text>
</comment>
<comment type="induction">
    <text evidence="6">By stress conditions.</text>
</comment>
<comment type="domain">
    <text evidence="5">The N-terminal domain can bind calcium.</text>
</comment>
<comment type="similarity">
    <text evidence="13">Belongs to the mitochondrial carrier (TC 2.A.29) family.</text>
</comment>
<dbReference type="EMBL" id="AL163912">
    <property type="protein sequence ID" value="CAB87921.1"/>
    <property type="molecule type" value="Genomic_DNA"/>
</dbReference>
<dbReference type="EMBL" id="CP002688">
    <property type="protein sequence ID" value="AED91136.1"/>
    <property type="molecule type" value="Genomic_DNA"/>
</dbReference>
<dbReference type="EMBL" id="AK175228">
    <property type="protein sequence ID" value="BAD42991.1"/>
    <property type="molecule type" value="mRNA"/>
</dbReference>
<dbReference type="PIR" id="T49871">
    <property type="entry name" value="T49871"/>
</dbReference>
<dbReference type="RefSeq" id="NP_196349.1">
    <property type="nucleotide sequence ID" value="NM_120814.3"/>
</dbReference>
<dbReference type="SMR" id="Q9LY28"/>
<dbReference type="FunCoup" id="Q9LY28">
    <property type="interactions" value="2954"/>
</dbReference>
<dbReference type="IntAct" id="Q9LY28">
    <property type="interactions" value="1"/>
</dbReference>
<dbReference type="STRING" id="3702.Q9LY28"/>
<dbReference type="iPTMnet" id="Q9LY28"/>
<dbReference type="PaxDb" id="3702-AT5G07320.1"/>
<dbReference type="ProteomicsDB" id="187418"/>
<dbReference type="EnsemblPlants" id="AT5G07320.1">
    <property type="protein sequence ID" value="AT5G07320.1"/>
    <property type="gene ID" value="AT5G07320"/>
</dbReference>
<dbReference type="GeneID" id="830623"/>
<dbReference type="Gramene" id="AT5G07320.1">
    <property type="protein sequence ID" value="AT5G07320.1"/>
    <property type="gene ID" value="AT5G07320"/>
</dbReference>
<dbReference type="KEGG" id="ath:AT5G07320"/>
<dbReference type="Araport" id="AT5G07320"/>
<dbReference type="TAIR" id="AT5G07320">
    <property type="gene designation" value="APC3"/>
</dbReference>
<dbReference type="eggNOG" id="KOG0036">
    <property type="taxonomic scope" value="Eukaryota"/>
</dbReference>
<dbReference type="HOGENOM" id="CLU_015166_2_1_1"/>
<dbReference type="InParanoid" id="Q9LY28"/>
<dbReference type="OMA" id="SGQWWKQ"/>
<dbReference type="OrthoDB" id="270584at2759"/>
<dbReference type="PhylomeDB" id="Q9LY28"/>
<dbReference type="PRO" id="PR:Q9LY28"/>
<dbReference type="Proteomes" id="UP000006548">
    <property type="component" value="Chromosome 5"/>
</dbReference>
<dbReference type="ExpressionAtlas" id="Q9LY28">
    <property type="expression patterns" value="baseline and differential"/>
</dbReference>
<dbReference type="GO" id="GO:0005743">
    <property type="term" value="C:mitochondrial inner membrane"/>
    <property type="evidence" value="ECO:0007669"/>
    <property type="project" value="UniProtKB-SubCell"/>
</dbReference>
<dbReference type="GO" id="GO:0005739">
    <property type="term" value="C:mitochondrion"/>
    <property type="evidence" value="ECO:0000314"/>
    <property type="project" value="TAIR"/>
</dbReference>
<dbReference type="GO" id="GO:0015217">
    <property type="term" value="F:ADP transmembrane transporter activity"/>
    <property type="evidence" value="ECO:0000314"/>
    <property type="project" value="UniProtKB"/>
</dbReference>
<dbReference type="GO" id="GO:0080122">
    <property type="term" value="F:AMP transmembrane transporter activity"/>
    <property type="evidence" value="ECO:0000314"/>
    <property type="project" value="TAIR"/>
</dbReference>
<dbReference type="GO" id="GO:0005347">
    <property type="term" value="F:ATP transmembrane transporter activity"/>
    <property type="evidence" value="ECO:0000314"/>
    <property type="project" value="UniProtKB"/>
</dbReference>
<dbReference type="GO" id="GO:0005509">
    <property type="term" value="F:calcium ion binding"/>
    <property type="evidence" value="ECO:0000314"/>
    <property type="project" value="TAIR"/>
</dbReference>
<dbReference type="GO" id="GO:0015085">
    <property type="term" value="F:calcium ion transmembrane transporter activity"/>
    <property type="evidence" value="ECO:0000250"/>
    <property type="project" value="UniProtKB"/>
</dbReference>
<dbReference type="GO" id="GO:0005315">
    <property type="term" value="F:phosphate transmembrane transporter activity"/>
    <property type="evidence" value="ECO:0000314"/>
    <property type="project" value="UniProtKB"/>
</dbReference>
<dbReference type="GO" id="GO:0015866">
    <property type="term" value="P:ADP transport"/>
    <property type="evidence" value="ECO:0000314"/>
    <property type="project" value="UniProtKB"/>
</dbReference>
<dbReference type="GO" id="GO:0080121">
    <property type="term" value="P:AMP transport"/>
    <property type="evidence" value="ECO:0000314"/>
    <property type="project" value="TAIR"/>
</dbReference>
<dbReference type="GO" id="GO:0015867">
    <property type="term" value="P:ATP transport"/>
    <property type="evidence" value="ECO:0000314"/>
    <property type="project" value="UniProtKB"/>
</dbReference>
<dbReference type="GO" id="GO:0070588">
    <property type="term" value="P:calcium ion transmembrane transport"/>
    <property type="evidence" value="ECO:0000250"/>
    <property type="project" value="UniProtKB"/>
</dbReference>
<dbReference type="GO" id="GO:0035435">
    <property type="term" value="P:phosphate ion transmembrane transport"/>
    <property type="evidence" value="ECO:0000314"/>
    <property type="project" value="UniProtKB"/>
</dbReference>
<dbReference type="CDD" id="cd15898">
    <property type="entry name" value="EFh_PI-PLC"/>
    <property type="match status" value="1"/>
</dbReference>
<dbReference type="FunFam" id="1.10.238.10:FF:000138">
    <property type="entry name" value="Calcium-binding mitochondrial carrier protein SCaMC-1"/>
    <property type="match status" value="1"/>
</dbReference>
<dbReference type="FunFam" id="1.10.238.10:FF:000370">
    <property type="entry name" value="Mitochondrial substrate carrier family protein"/>
    <property type="match status" value="1"/>
</dbReference>
<dbReference type="FunFam" id="1.50.40.10:FF:000067">
    <property type="entry name" value="Mitochondrial substrate carrier family protein"/>
    <property type="match status" value="1"/>
</dbReference>
<dbReference type="Gene3D" id="1.10.238.10">
    <property type="entry name" value="EF-hand"/>
    <property type="match status" value="2"/>
</dbReference>
<dbReference type="Gene3D" id="1.50.40.10">
    <property type="entry name" value="Mitochondrial carrier domain"/>
    <property type="match status" value="1"/>
</dbReference>
<dbReference type="InterPro" id="IPR011992">
    <property type="entry name" value="EF-hand-dom_pair"/>
</dbReference>
<dbReference type="InterPro" id="IPR018247">
    <property type="entry name" value="EF_Hand_1_Ca_BS"/>
</dbReference>
<dbReference type="InterPro" id="IPR002048">
    <property type="entry name" value="EF_hand_dom"/>
</dbReference>
<dbReference type="InterPro" id="IPR002067">
    <property type="entry name" value="Mit_carrier"/>
</dbReference>
<dbReference type="InterPro" id="IPR018108">
    <property type="entry name" value="Mitochondrial_sb/sol_carrier"/>
</dbReference>
<dbReference type="InterPro" id="IPR023395">
    <property type="entry name" value="Mt_carrier_dom_sf"/>
</dbReference>
<dbReference type="PANTHER" id="PTHR24089">
    <property type="entry name" value="SOLUTE CARRIER FAMILY 25"/>
    <property type="match status" value="1"/>
</dbReference>
<dbReference type="Pfam" id="PF13499">
    <property type="entry name" value="EF-hand_7"/>
    <property type="match status" value="2"/>
</dbReference>
<dbReference type="Pfam" id="PF00153">
    <property type="entry name" value="Mito_carr"/>
    <property type="match status" value="3"/>
</dbReference>
<dbReference type="PRINTS" id="PR00926">
    <property type="entry name" value="MITOCARRIER"/>
</dbReference>
<dbReference type="SMART" id="SM00054">
    <property type="entry name" value="EFh"/>
    <property type="match status" value="4"/>
</dbReference>
<dbReference type="SUPFAM" id="SSF47473">
    <property type="entry name" value="EF-hand"/>
    <property type="match status" value="1"/>
</dbReference>
<dbReference type="SUPFAM" id="SSF103506">
    <property type="entry name" value="Mitochondrial carrier"/>
    <property type="match status" value="1"/>
</dbReference>
<dbReference type="PROSITE" id="PS00018">
    <property type="entry name" value="EF_HAND_1"/>
    <property type="match status" value="2"/>
</dbReference>
<dbReference type="PROSITE" id="PS50222">
    <property type="entry name" value="EF_HAND_2"/>
    <property type="match status" value="4"/>
</dbReference>
<dbReference type="PROSITE" id="PS50920">
    <property type="entry name" value="SOLCAR"/>
    <property type="match status" value="3"/>
</dbReference>
<evidence type="ECO:0000250" key="1">
    <source>
        <dbReference type="UniProtKB" id="Q9FI43"/>
    </source>
</evidence>
<evidence type="ECO:0000255" key="2"/>
<evidence type="ECO:0000255" key="3">
    <source>
        <dbReference type="PROSITE-ProRule" id="PRU00282"/>
    </source>
</evidence>
<evidence type="ECO:0000255" key="4">
    <source>
        <dbReference type="PROSITE-ProRule" id="PRU00448"/>
    </source>
</evidence>
<evidence type="ECO:0000269" key="5">
    <source>
    </source>
</evidence>
<evidence type="ECO:0000269" key="6">
    <source>
    </source>
</evidence>
<evidence type="ECO:0000269" key="7">
    <source>
    </source>
</evidence>
<evidence type="ECO:0000269" key="8">
    <source>
    </source>
</evidence>
<evidence type="ECO:0000303" key="9">
    <source>
    </source>
</evidence>
<evidence type="ECO:0000303" key="10">
    <source>
    </source>
</evidence>
<evidence type="ECO:0000303" key="11">
    <source>
    </source>
</evidence>
<evidence type="ECO:0000303" key="12">
    <source>
    </source>
</evidence>
<evidence type="ECO:0000305" key="13"/>
<evidence type="ECO:0000305" key="14">
    <source>
    </source>
</evidence>
<evidence type="ECO:0000312" key="15">
    <source>
        <dbReference type="Araport" id="AT5G07320"/>
    </source>
</evidence>
<evidence type="ECO:0000312" key="16">
    <source>
        <dbReference type="EMBL" id="CAB87921.1"/>
    </source>
</evidence>
<protein>
    <recommendedName>
        <fullName evidence="10">Calcium-dependent mitochondrial ATP-magnesium/phosphate carrier protein 3</fullName>
        <shortName evidence="11 12">AtAPC3</shortName>
        <shortName evidence="10 12">Mitochondrial ATP-Mg/Pi carrier protein 3</shortName>
    </recommendedName>
</protein>
<sequence>MESSKPKNRNPMKKPVSITMEHVLLALRETMDEREIRIRSLFDFFDNSNLGFLDYAQIEKGLASLQIPPEYKYARDLFRVCDANRDGRVDYQEFRRYIDAKELELYRIFQAIDVEHNGCILPEELWEALVKAGIEIDDEELARFVEHVDKDNNGTITFEEWRDFLLLYPHEATLENIYHHWERVCLIDIGEQAVIPDGISKHVKRSRLLLAGGLAGAVSRTATAPLDRLKVVLQVQRAHAGVLPTIKKIWREDKLMGFFRGNGLNVMKVAPESAIKFCAYEMLKPMIGGEDGDIGTSGRLMAGGMAGALAQTAIYPMDLVKTRLQTCVSEGGKAPKLWKLTKDIWVREGPRAFYKGLFPSLLGIVPYAGIDLAAYETLKDLSRTYILQDTEPGPLIQLSCGMTSGALGASCVYPLQVVRTRMQADSSKTTMKQEFMNTMKGEGLRGFYRGLLPNLLKVVPAASITYIVYEAMKKNMALD</sequence>
<keyword id="KW-0106">Calcium</keyword>
<keyword id="KW-0472">Membrane</keyword>
<keyword id="KW-0479">Metal-binding</keyword>
<keyword id="KW-0496">Mitochondrion</keyword>
<keyword id="KW-0999">Mitochondrion inner membrane</keyword>
<keyword id="KW-1185">Reference proteome</keyword>
<keyword id="KW-0677">Repeat</keyword>
<keyword id="KW-0812">Transmembrane</keyword>
<keyword id="KW-1133">Transmembrane helix</keyword>
<keyword id="KW-0813">Transport</keyword>
<organism>
    <name type="scientific">Arabidopsis thaliana</name>
    <name type="common">Mouse-ear cress</name>
    <dbReference type="NCBI Taxonomy" id="3702"/>
    <lineage>
        <taxon>Eukaryota</taxon>
        <taxon>Viridiplantae</taxon>
        <taxon>Streptophyta</taxon>
        <taxon>Embryophyta</taxon>
        <taxon>Tracheophyta</taxon>
        <taxon>Spermatophyta</taxon>
        <taxon>Magnoliopsida</taxon>
        <taxon>eudicotyledons</taxon>
        <taxon>Gunneridae</taxon>
        <taxon>Pentapetalae</taxon>
        <taxon>rosids</taxon>
        <taxon>malvids</taxon>
        <taxon>Brassicales</taxon>
        <taxon>Brassicaceae</taxon>
        <taxon>Camelineae</taxon>
        <taxon>Arabidopsis</taxon>
    </lineage>
</organism>
<feature type="chain" id="PRO_0000447463" description="Calcium-dependent mitochondrial ATP-magnesium/phosphate carrier protein 3">
    <location>
        <begin position="1"/>
        <end position="479"/>
    </location>
</feature>
<feature type="topological domain" description="Mitochondrial intermembrane" evidence="14">
    <location>
        <begin position="1"/>
        <end position="208"/>
    </location>
</feature>
<feature type="transmembrane region" description="Helical; Name=1" evidence="2">
    <location>
        <begin position="209"/>
        <end position="226"/>
    </location>
</feature>
<feature type="topological domain" description="Mitochondrial matrix" evidence="14">
    <location>
        <begin position="227"/>
        <end position="260"/>
    </location>
</feature>
<feature type="transmembrane region" description="Helical; Name=2" evidence="2">
    <location>
        <begin position="261"/>
        <end position="280"/>
    </location>
</feature>
<feature type="topological domain" description="Mitochondrial intermembrane" evidence="14">
    <location>
        <begin position="281"/>
        <end position="303"/>
    </location>
</feature>
<feature type="transmembrane region" description="Helical; Name=3" evidence="2">
    <location>
        <begin position="304"/>
        <end position="317"/>
    </location>
</feature>
<feature type="topological domain" description="Mitochondrial matrix" evidence="14">
    <location>
        <begin position="318"/>
        <end position="355"/>
    </location>
</feature>
<feature type="transmembrane region" description="Helical; Name=4" evidence="2">
    <location>
        <begin position="356"/>
        <end position="375"/>
    </location>
</feature>
<feature type="topological domain" description="Mitochondrial intermembrane" evidence="14">
    <location>
        <begin position="376"/>
        <end position="397"/>
    </location>
</feature>
<feature type="transmembrane region" description="Helical; Name=5" evidence="2">
    <location>
        <begin position="398"/>
        <end position="415"/>
    </location>
</feature>
<feature type="topological domain" description="Mitochondrial matrix" evidence="14">
    <location>
        <begin position="416"/>
        <end position="449"/>
    </location>
</feature>
<feature type="transmembrane region" description="Helical; Name=6" evidence="2">
    <location>
        <begin position="450"/>
        <end position="469"/>
    </location>
</feature>
<feature type="topological domain" description="Mitochondrial intermembrane" evidence="14">
    <location>
        <begin position="470"/>
        <end position="479"/>
    </location>
</feature>
<feature type="domain" description="EF-hand 1" evidence="4">
    <location>
        <begin position="33"/>
        <end position="68"/>
    </location>
</feature>
<feature type="domain" description="EF-hand 2" evidence="4">
    <location>
        <begin position="69"/>
        <end position="104"/>
    </location>
</feature>
<feature type="domain" description="EF-hand 3" evidence="4">
    <location>
        <begin position="105"/>
        <end position="135"/>
    </location>
</feature>
<feature type="domain" description="EF-hand 4" evidence="4">
    <location>
        <begin position="136"/>
        <end position="171"/>
    </location>
</feature>
<feature type="repeat" description="Solcar 1" evidence="3">
    <location>
        <begin position="203"/>
        <end position="286"/>
    </location>
</feature>
<feature type="repeat" description="Solcar 2" evidence="3">
    <location>
        <begin position="294"/>
        <end position="381"/>
    </location>
</feature>
<feature type="repeat" description="Solcar 3" evidence="3">
    <location>
        <begin position="392"/>
        <end position="475"/>
    </location>
</feature>
<feature type="binding site" evidence="4">
    <location>
        <position position="82"/>
    </location>
    <ligand>
        <name>Ca(2+)</name>
        <dbReference type="ChEBI" id="CHEBI:29108"/>
        <label>1</label>
    </ligand>
</feature>
<feature type="binding site" evidence="4">
    <location>
        <position position="84"/>
    </location>
    <ligand>
        <name>Ca(2+)</name>
        <dbReference type="ChEBI" id="CHEBI:29108"/>
        <label>1</label>
    </ligand>
</feature>
<feature type="binding site" evidence="4">
    <location>
        <position position="86"/>
    </location>
    <ligand>
        <name>Ca(2+)</name>
        <dbReference type="ChEBI" id="CHEBI:29108"/>
        <label>1</label>
    </ligand>
</feature>
<feature type="binding site" evidence="4">
    <location>
        <position position="88"/>
    </location>
    <ligand>
        <name>Ca(2+)</name>
        <dbReference type="ChEBI" id="CHEBI:29108"/>
        <label>1</label>
    </ligand>
</feature>
<feature type="binding site" evidence="4">
    <location>
        <position position="93"/>
    </location>
    <ligand>
        <name>Ca(2+)</name>
        <dbReference type="ChEBI" id="CHEBI:29108"/>
        <label>1</label>
    </ligand>
</feature>
<feature type="binding site" evidence="4">
    <location>
        <position position="149"/>
    </location>
    <ligand>
        <name>Ca(2+)</name>
        <dbReference type="ChEBI" id="CHEBI:29108"/>
        <label>2</label>
    </ligand>
</feature>
<feature type="binding site" evidence="4">
    <location>
        <position position="151"/>
    </location>
    <ligand>
        <name>Ca(2+)</name>
        <dbReference type="ChEBI" id="CHEBI:29108"/>
        <label>2</label>
    </ligand>
</feature>
<feature type="binding site" evidence="4">
    <location>
        <position position="153"/>
    </location>
    <ligand>
        <name>Ca(2+)</name>
        <dbReference type="ChEBI" id="CHEBI:29108"/>
        <label>2</label>
    </ligand>
</feature>
<feature type="binding site" evidence="4">
    <location>
        <position position="155"/>
    </location>
    <ligand>
        <name>Ca(2+)</name>
        <dbReference type="ChEBI" id="CHEBI:29108"/>
        <label>2</label>
    </ligand>
</feature>
<feature type="binding site" evidence="4">
    <location>
        <position position="160"/>
    </location>
    <ligand>
        <name>Ca(2+)</name>
        <dbReference type="ChEBI" id="CHEBI:29108"/>
        <label>2</label>
    </ligand>
</feature>
<accession>Q9LY28</accession>
<name>MAPC3_ARATH</name>
<reference key="1">
    <citation type="journal article" date="2000" name="Nature">
        <title>Sequence and analysis of chromosome 5 of the plant Arabidopsis thaliana.</title>
        <authorList>
            <person name="Tabata S."/>
            <person name="Kaneko T."/>
            <person name="Nakamura Y."/>
            <person name="Kotani H."/>
            <person name="Kato T."/>
            <person name="Asamizu E."/>
            <person name="Miyajima N."/>
            <person name="Sasamoto S."/>
            <person name="Kimura T."/>
            <person name="Hosouchi T."/>
            <person name="Kawashima K."/>
            <person name="Kohara M."/>
            <person name="Matsumoto M."/>
            <person name="Matsuno A."/>
            <person name="Muraki A."/>
            <person name="Nakayama S."/>
            <person name="Nakazaki N."/>
            <person name="Naruo K."/>
            <person name="Okumura S."/>
            <person name="Shinpo S."/>
            <person name="Takeuchi C."/>
            <person name="Wada T."/>
            <person name="Watanabe A."/>
            <person name="Yamada M."/>
            <person name="Yasuda M."/>
            <person name="Sato S."/>
            <person name="de la Bastide M."/>
            <person name="Huang E."/>
            <person name="Spiegel L."/>
            <person name="Gnoj L."/>
            <person name="O'Shaughnessy A."/>
            <person name="Preston R."/>
            <person name="Habermann K."/>
            <person name="Murray J."/>
            <person name="Johnson D."/>
            <person name="Rohlfing T."/>
            <person name="Nelson J."/>
            <person name="Stoneking T."/>
            <person name="Pepin K."/>
            <person name="Spieth J."/>
            <person name="Sekhon M."/>
            <person name="Armstrong J."/>
            <person name="Becker M."/>
            <person name="Belter E."/>
            <person name="Cordum H."/>
            <person name="Cordes M."/>
            <person name="Courtney L."/>
            <person name="Courtney W."/>
            <person name="Dante M."/>
            <person name="Du H."/>
            <person name="Edwards J."/>
            <person name="Fryman J."/>
            <person name="Haakensen B."/>
            <person name="Lamar E."/>
            <person name="Latreille P."/>
            <person name="Leonard S."/>
            <person name="Meyer R."/>
            <person name="Mulvaney E."/>
            <person name="Ozersky P."/>
            <person name="Riley A."/>
            <person name="Strowmatt C."/>
            <person name="Wagner-McPherson C."/>
            <person name="Wollam A."/>
            <person name="Yoakum M."/>
            <person name="Bell M."/>
            <person name="Dedhia N."/>
            <person name="Parnell L."/>
            <person name="Shah R."/>
            <person name="Rodriguez M."/>
            <person name="Hoon See L."/>
            <person name="Vil D."/>
            <person name="Baker J."/>
            <person name="Kirchoff K."/>
            <person name="Toth K."/>
            <person name="King L."/>
            <person name="Bahret A."/>
            <person name="Miller B."/>
            <person name="Marra M.A."/>
            <person name="Martienssen R."/>
            <person name="McCombie W.R."/>
            <person name="Wilson R.K."/>
            <person name="Murphy G."/>
            <person name="Bancroft I."/>
            <person name="Volckaert G."/>
            <person name="Wambutt R."/>
            <person name="Duesterhoeft A."/>
            <person name="Stiekema W."/>
            <person name="Pohl T."/>
            <person name="Entian K.-D."/>
            <person name="Terryn N."/>
            <person name="Hartley N."/>
            <person name="Bent E."/>
            <person name="Johnson S."/>
            <person name="Langham S.-A."/>
            <person name="McCullagh B."/>
            <person name="Robben J."/>
            <person name="Grymonprez B."/>
            <person name="Zimmermann W."/>
            <person name="Ramsperger U."/>
            <person name="Wedler H."/>
            <person name="Balke K."/>
            <person name="Wedler E."/>
            <person name="Peters S."/>
            <person name="van Staveren M."/>
            <person name="Dirkse W."/>
            <person name="Mooijman P."/>
            <person name="Klein Lankhorst R."/>
            <person name="Weitzenegger T."/>
            <person name="Bothe G."/>
            <person name="Rose M."/>
            <person name="Hauf J."/>
            <person name="Berneiser S."/>
            <person name="Hempel S."/>
            <person name="Feldpausch M."/>
            <person name="Lamberth S."/>
            <person name="Villarroel R."/>
            <person name="Gielen J."/>
            <person name="Ardiles W."/>
            <person name="Bents O."/>
            <person name="Lemcke K."/>
            <person name="Kolesov G."/>
            <person name="Mayer K.F.X."/>
            <person name="Rudd S."/>
            <person name="Schoof H."/>
            <person name="Schueller C."/>
            <person name="Zaccaria P."/>
            <person name="Mewes H.-W."/>
            <person name="Bevan M."/>
            <person name="Fransz P.F."/>
        </authorList>
    </citation>
    <scope>NUCLEOTIDE SEQUENCE [LARGE SCALE GENOMIC DNA]</scope>
    <source>
        <strain>cv. Columbia</strain>
    </source>
</reference>
<reference key="2">
    <citation type="journal article" date="2017" name="Plant J.">
        <title>Araport11: a complete reannotation of the Arabidopsis thaliana reference genome.</title>
        <authorList>
            <person name="Cheng C.Y."/>
            <person name="Krishnakumar V."/>
            <person name="Chan A.P."/>
            <person name="Thibaud-Nissen F."/>
            <person name="Schobel S."/>
            <person name="Town C.D."/>
        </authorList>
    </citation>
    <scope>GENOME REANNOTATION</scope>
    <source>
        <strain>cv. Columbia</strain>
    </source>
</reference>
<reference key="3">
    <citation type="submission" date="2004-09" db="EMBL/GenBank/DDBJ databases">
        <title>Large-scale analysis of RIKEN Arabidopsis full-length (RAFL) cDNAs.</title>
        <authorList>
            <person name="Totoki Y."/>
            <person name="Seki M."/>
            <person name="Ishida J."/>
            <person name="Nakajima M."/>
            <person name="Enju A."/>
            <person name="Kamiya A."/>
            <person name="Narusaka M."/>
            <person name="Shin-i T."/>
            <person name="Nakagawa M."/>
            <person name="Sakamoto N."/>
            <person name="Oishi K."/>
            <person name="Kohara Y."/>
            <person name="Kobayashi M."/>
            <person name="Toyoda A."/>
            <person name="Sakaki Y."/>
            <person name="Sakurai T."/>
            <person name="Iida K."/>
            <person name="Akiyama K."/>
            <person name="Satou M."/>
            <person name="Toyoda T."/>
            <person name="Konagaya A."/>
            <person name="Carninci P."/>
            <person name="Kawai J."/>
            <person name="Hayashizaki Y."/>
            <person name="Shinozaki K."/>
        </authorList>
    </citation>
    <scope>NUCLEOTIDE SEQUENCE [LARGE SCALE MRNA]</scope>
    <source>
        <strain>cv. Columbia</strain>
    </source>
</reference>
<reference key="4">
    <citation type="journal article" date="2002" name="Genome Biol.">
        <title>Analysis of EF-hand-containing proteins in Arabidopsis.</title>
        <authorList>
            <person name="Day I.S."/>
            <person name="Reddy V.S."/>
            <person name="Shad Ali G."/>
            <person name="Reddy A.S."/>
        </authorList>
    </citation>
    <scope>GENE FAMILY</scope>
</reference>
<reference key="5">
    <citation type="journal article" date="2004" name="Trends Plant Sci.">
        <title>The growing family of mitochondrial carriers in Arabidopsis.</title>
        <authorList>
            <person name="Picault N."/>
            <person name="Hodges M."/>
            <person name="Palmieri L."/>
            <person name="Palmieri F."/>
        </authorList>
    </citation>
    <scope>REVIEW</scope>
    <scope>GENE FAMILY</scope>
</reference>
<reference key="6">
    <citation type="journal article" date="2011" name="FEBS Lett.">
        <title>Arabidopsis calcium-binding mitochondrial carrier proteins as potential facilitators of mitochondrial ATP-import and plastid SAM-import.</title>
        <authorList>
            <person name="Stael S."/>
            <person name="Rocha A.G."/>
            <person name="Robinson A.J."/>
            <person name="Kmiecik P."/>
            <person name="Vothknecht U.C."/>
            <person name="Teige M."/>
        </authorList>
    </citation>
    <scope>FUNCTION</scope>
    <scope>SUBCELLULAR LOCATION</scope>
    <scope>TOPOLOGY</scope>
</reference>
<reference key="7">
    <citation type="journal article" date="2011" name="Plant J.">
        <title>Evolution, structure and function of mitochondrial carriers: a review with new insights.</title>
        <authorList>
            <person name="Palmieri F."/>
            <person name="Pierri C.L."/>
            <person name="De Grassi A."/>
            <person name="Nunes-Nesi A."/>
            <person name="Fernie A.R."/>
        </authorList>
    </citation>
    <scope>GENE FAMILY</scope>
</reference>
<reference key="8">
    <citation type="journal article" date="2015" name="Biochim. Biophys. Acta">
        <title>Functional characterization and organ distribution of three mitochondrial ATP-Mg/Pi carriers in Arabidopsis thaliana.</title>
        <authorList>
            <person name="Monne M."/>
            <person name="Miniero D.V."/>
            <person name="Obata T."/>
            <person name="Daddabbo L."/>
            <person name="Palmieri L."/>
            <person name="Vozza A."/>
            <person name="Nicolardi M.C."/>
            <person name="Fernie A.R."/>
            <person name="Palmieri F."/>
        </authorList>
    </citation>
    <scope>FUNCTION</scope>
    <scope>BIOPHYSICOCHEMICAL PROPERTIES</scope>
    <scope>TISSUE SPECIFICITY</scope>
    <scope>DEVELOPMENTAL STAGE</scope>
    <scope>INDUCTION BY STRESS CONDITIONS</scope>
    <scope>ACTIVITY REGULATION</scope>
    <source>
        <strain>cv. Columbia</strain>
    </source>
</reference>
<reference key="9">
    <citation type="journal article" date="2015" name="BMC Plant Biol.">
        <title>In vitro analyses of mitochondrial ATP/phosphate carriers from Arabidopsis thaliana revealed unexpected Ca(2+)-effects.</title>
        <authorList>
            <person name="Lorenz A."/>
            <person name="Lorenz M."/>
            <person name="Vothknecht U.C."/>
            <person name="Niopek-Witz S."/>
            <person name="Neuhaus H.E."/>
            <person name="Haferkamp I."/>
        </authorList>
    </citation>
    <scope>FUNCTION</scope>
    <scope>BIOPHYSICOCHEMICAL PROPERTIES</scope>
    <scope>ACTIVITY REGULATION</scope>
</reference>
<reference key="10">
    <citation type="journal article" date="2016" name="Biochim. Biophys. Acta">
        <title>Calcium regulation of mitochondrial carriers.</title>
        <authorList>
            <person name="Del Arco A."/>
            <person name="Contreras L."/>
            <person name="Pardo B."/>
            <person name="Satrustegui J."/>
        </authorList>
    </citation>
    <scope>REVIEW</scope>
</reference>
<reference key="11">
    <citation type="journal article" date="2017" name="J. Bioenerg. Biomembr.">
        <title>Mitochondrial ATP-Mg/phosphate carriers transport divalent inorganic cations in complex with ATP.</title>
        <authorList>
            <person name="Monne M."/>
            <person name="Daddabbo L."/>
            <person name="Giannossa L.C."/>
            <person name="Nicolardi M.C."/>
            <person name="Palmieri L."/>
            <person name="Miniero D.V."/>
            <person name="Mangone A."/>
            <person name="Palmieri F."/>
        </authorList>
    </citation>
    <scope>FUNCTION</scope>
    <scope>ACTIVITY REGULATION</scope>
</reference>
<gene>
    <name evidence="9 10" type="primary">APC3</name>
    <name evidence="15" type="ordered locus">At5g07320</name>
    <name evidence="16" type="ORF">T2I1.30</name>
</gene>
<proteinExistence type="evidence at protein level"/>